<organism>
    <name type="scientific">Clostridium kluyveri (strain NBRC 12016)</name>
    <dbReference type="NCBI Taxonomy" id="583346"/>
    <lineage>
        <taxon>Bacteria</taxon>
        <taxon>Bacillati</taxon>
        <taxon>Bacillota</taxon>
        <taxon>Clostridia</taxon>
        <taxon>Eubacteriales</taxon>
        <taxon>Clostridiaceae</taxon>
        <taxon>Clostridium</taxon>
    </lineage>
</organism>
<protein>
    <recommendedName>
        <fullName evidence="1">Phosphoribosylaminoimidazole-succinocarboxamide synthase</fullName>
        <ecNumber evidence="1">6.3.2.6</ecNumber>
    </recommendedName>
    <alternativeName>
        <fullName evidence="1">SAICAR synthetase</fullName>
    </alternativeName>
</protein>
<feature type="chain" id="PRO_1000122910" description="Phosphoribosylaminoimidazole-succinocarboxamide synthase">
    <location>
        <begin position="1"/>
        <end position="235"/>
    </location>
</feature>
<dbReference type="EC" id="6.3.2.6" evidence="1"/>
<dbReference type="EMBL" id="AP009049">
    <property type="protein sequence ID" value="BAH07435.1"/>
    <property type="molecule type" value="Genomic_DNA"/>
</dbReference>
<dbReference type="RefSeq" id="WP_012103030.1">
    <property type="nucleotide sequence ID" value="NC_011837.1"/>
</dbReference>
<dbReference type="SMR" id="B9E4L0"/>
<dbReference type="KEGG" id="ckr:CKR_2384"/>
<dbReference type="HOGENOM" id="CLU_061495_2_0_9"/>
<dbReference type="UniPathway" id="UPA00074">
    <property type="reaction ID" value="UER00131"/>
</dbReference>
<dbReference type="Proteomes" id="UP000007969">
    <property type="component" value="Chromosome"/>
</dbReference>
<dbReference type="GO" id="GO:0005524">
    <property type="term" value="F:ATP binding"/>
    <property type="evidence" value="ECO:0007669"/>
    <property type="project" value="UniProtKB-KW"/>
</dbReference>
<dbReference type="GO" id="GO:0004639">
    <property type="term" value="F:phosphoribosylaminoimidazolesuccinocarboxamide synthase activity"/>
    <property type="evidence" value="ECO:0007669"/>
    <property type="project" value="UniProtKB-UniRule"/>
</dbReference>
<dbReference type="GO" id="GO:0006189">
    <property type="term" value="P:'de novo' IMP biosynthetic process"/>
    <property type="evidence" value="ECO:0007669"/>
    <property type="project" value="UniProtKB-UniRule"/>
</dbReference>
<dbReference type="GO" id="GO:0009236">
    <property type="term" value="P:cobalamin biosynthetic process"/>
    <property type="evidence" value="ECO:0007669"/>
    <property type="project" value="InterPro"/>
</dbReference>
<dbReference type="CDD" id="cd01415">
    <property type="entry name" value="SAICAR_synt_PurC"/>
    <property type="match status" value="1"/>
</dbReference>
<dbReference type="FunFam" id="3.30.470.20:FF:000006">
    <property type="entry name" value="Phosphoribosylaminoimidazole-succinocarboxamide synthase"/>
    <property type="match status" value="1"/>
</dbReference>
<dbReference type="Gene3D" id="3.30.470.20">
    <property type="entry name" value="ATP-grasp fold, B domain"/>
    <property type="match status" value="1"/>
</dbReference>
<dbReference type="Gene3D" id="3.30.200.20">
    <property type="entry name" value="Phosphorylase Kinase, domain 1"/>
    <property type="match status" value="1"/>
</dbReference>
<dbReference type="HAMAP" id="MF_00137">
    <property type="entry name" value="SAICAR_synth"/>
    <property type="match status" value="1"/>
</dbReference>
<dbReference type="InterPro" id="IPR028923">
    <property type="entry name" value="SAICAR_synt/ADE2_N"/>
</dbReference>
<dbReference type="InterPro" id="IPR033934">
    <property type="entry name" value="SAICAR_synt_PurC"/>
</dbReference>
<dbReference type="InterPro" id="IPR001636">
    <property type="entry name" value="SAICAR_synth"/>
</dbReference>
<dbReference type="InterPro" id="IPR050089">
    <property type="entry name" value="SAICAR_synthetase"/>
</dbReference>
<dbReference type="InterPro" id="IPR018236">
    <property type="entry name" value="SAICAR_synthetase_CS"/>
</dbReference>
<dbReference type="NCBIfam" id="TIGR00081">
    <property type="entry name" value="purC"/>
    <property type="match status" value="1"/>
</dbReference>
<dbReference type="PANTHER" id="PTHR43599">
    <property type="entry name" value="MULTIFUNCTIONAL PROTEIN ADE2"/>
    <property type="match status" value="1"/>
</dbReference>
<dbReference type="PANTHER" id="PTHR43599:SF3">
    <property type="entry name" value="SI:DKEY-6E2.2"/>
    <property type="match status" value="1"/>
</dbReference>
<dbReference type="Pfam" id="PF01259">
    <property type="entry name" value="SAICAR_synt"/>
    <property type="match status" value="1"/>
</dbReference>
<dbReference type="SUPFAM" id="SSF56104">
    <property type="entry name" value="SAICAR synthase-like"/>
    <property type="match status" value="1"/>
</dbReference>
<dbReference type="PROSITE" id="PS01057">
    <property type="entry name" value="SAICAR_SYNTHETASE_1"/>
    <property type="match status" value="1"/>
</dbReference>
<dbReference type="PROSITE" id="PS01058">
    <property type="entry name" value="SAICAR_SYNTHETASE_2"/>
    <property type="match status" value="1"/>
</dbReference>
<comment type="catalytic activity">
    <reaction evidence="1">
        <text>5-amino-1-(5-phospho-D-ribosyl)imidazole-4-carboxylate + L-aspartate + ATP = (2S)-2-[5-amino-1-(5-phospho-beta-D-ribosyl)imidazole-4-carboxamido]succinate + ADP + phosphate + 2 H(+)</text>
        <dbReference type="Rhea" id="RHEA:22628"/>
        <dbReference type="ChEBI" id="CHEBI:15378"/>
        <dbReference type="ChEBI" id="CHEBI:29991"/>
        <dbReference type="ChEBI" id="CHEBI:30616"/>
        <dbReference type="ChEBI" id="CHEBI:43474"/>
        <dbReference type="ChEBI" id="CHEBI:58443"/>
        <dbReference type="ChEBI" id="CHEBI:77657"/>
        <dbReference type="ChEBI" id="CHEBI:456216"/>
        <dbReference type="EC" id="6.3.2.6"/>
    </reaction>
</comment>
<comment type="pathway">
    <text evidence="1">Purine metabolism; IMP biosynthesis via de novo pathway; 5-amino-1-(5-phospho-D-ribosyl)imidazole-4-carboxamide from 5-amino-1-(5-phospho-D-ribosyl)imidazole-4-carboxylate: step 1/2.</text>
</comment>
<comment type="similarity">
    <text evidence="1">Belongs to the SAICAR synthetase family.</text>
</comment>
<proteinExistence type="inferred from homology"/>
<sequence length="235" mass="27011">MKKGEMIYQGKAKKVYETDDKDKVIIYYKDDATAFNGEKKGQITDKGILNNNITSSLFELLEKNNIPTHFEKKLNDREQLCKKVDIIPLEVIVRNVAAGSMAKRLGLEEGTPLKTTVFELSYKDDSLGDPIINDYHAVAIGIATWDELKTIYDMTASINDILELFFRKLGIKLIDFKLEFGKFKDKIVLADEISPDTCRLWDAVTNEKLDKDRFRRDMGNVKEAYEEILRRISDN</sequence>
<reference key="1">
    <citation type="submission" date="2005-09" db="EMBL/GenBank/DDBJ databases">
        <title>Complete genome sequence of Clostridium kluyveri and comparative genomics of Clostridia species.</title>
        <authorList>
            <person name="Inui M."/>
            <person name="Nonaka H."/>
            <person name="Shinoda Y."/>
            <person name="Ikenaga Y."/>
            <person name="Abe M."/>
            <person name="Naito K."/>
            <person name="Vertes A.A."/>
            <person name="Yukawa H."/>
        </authorList>
    </citation>
    <scope>NUCLEOTIDE SEQUENCE [LARGE SCALE GENOMIC DNA]</scope>
    <source>
        <strain>NBRC 12016</strain>
    </source>
</reference>
<evidence type="ECO:0000255" key="1">
    <source>
        <dbReference type="HAMAP-Rule" id="MF_00137"/>
    </source>
</evidence>
<gene>
    <name evidence="1" type="primary">purC</name>
    <name type="ordered locus">CKR_2384</name>
</gene>
<accession>B9E4L0</accession>
<keyword id="KW-0067">ATP-binding</keyword>
<keyword id="KW-0436">Ligase</keyword>
<keyword id="KW-0547">Nucleotide-binding</keyword>
<keyword id="KW-0658">Purine biosynthesis</keyword>
<name>PUR7_CLOK1</name>